<reference key="1">
    <citation type="journal article" date="2005" name="Proc. Natl. Acad. Sci. U.S.A.">
        <title>Complete genome sequence of the probiotic lactic acid bacterium Lactobacillus acidophilus NCFM.</title>
        <authorList>
            <person name="Altermann E."/>
            <person name="Russell W.M."/>
            <person name="Azcarate-Peril M.A."/>
            <person name="Barrangou R."/>
            <person name="Buck B.L."/>
            <person name="McAuliffe O."/>
            <person name="Souther N."/>
            <person name="Dobson A."/>
            <person name="Duong T."/>
            <person name="Callanan M."/>
            <person name="Lick S."/>
            <person name="Hamrick A."/>
            <person name="Cano R."/>
            <person name="Klaenhammer T.R."/>
        </authorList>
    </citation>
    <scope>NUCLEOTIDE SEQUENCE [LARGE SCALE GENOMIC DNA]</scope>
    <source>
        <strain>ATCC 700396 / NCK56 / N2 / NCFM</strain>
    </source>
</reference>
<organism>
    <name type="scientific">Lactobacillus acidophilus (strain ATCC 700396 / NCK56 / N2 / NCFM)</name>
    <dbReference type="NCBI Taxonomy" id="272621"/>
    <lineage>
        <taxon>Bacteria</taxon>
        <taxon>Bacillati</taxon>
        <taxon>Bacillota</taxon>
        <taxon>Bacilli</taxon>
        <taxon>Lactobacillales</taxon>
        <taxon>Lactobacillaceae</taxon>
        <taxon>Lactobacillus</taxon>
    </lineage>
</organism>
<proteinExistence type="inferred from homology"/>
<feature type="chain" id="PRO_0000204960" description="DNA repair protein RecO">
    <location>
        <begin position="1"/>
        <end position="250"/>
    </location>
</feature>
<evidence type="ECO:0000255" key="1">
    <source>
        <dbReference type="HAMAP-Rule" id="MF_00201"/>
    </source>
</evidence>
<protein>
    <recommendedName>
        <fullName evidence="1">DNA repair protein RecO</fullName>
    </recommendedName>
    <alternativeName>
        <fullName evidence="1">Recombination protein O</fullName>
    </alternativeName>
</protein>
<comment type="function">
    <text evidence="1">Involved in DNA repair and RecF pathway recombination.</text>
</comment>
<comment type="similarity">
    <text evidence="1">Belongs to the RecO family.</text>
</comment>
<accession>Q5FJT8</accession>
<dbReference type="EMBL" id="CP000033">
    <property type="protein sequence ID" value="AAV43036.1"/>
    <property type="molecule type" value="Genomic_DNA"/>
</dbReference>
<dbReference type="RefSeq" id="WP_003547622.1">
    <property type="nucleotide sequence ID" value="NC_006814.3"/>
</dbReference>
<dbReference type="RefSeq" id="YP_194067.1">
    <property type="nucleotide sequence ID" value="NC_006814.3"/>
</dbReference>
<dbReference type="SMR" id="Q5FJT8"/>
<dbReference type="STRING" id="272621.LBA1200"/>
<dbReference type="GeneID" id="93289705"/>
<dbReference type="KEGG" id="lac:LBA1200"/>
<dbReference type="PATRIC" id="fig|272621.13.peg.1138"/>
<dbReference type="eggNOG" id="COG1381">
    <property type="taxonomic scope" value="Bacteria"/>
</dbReference>
<dbReference type="HOGENOM" id="CLU_066632_4_0_9"/>
<dbReference type="OrthoDB" id="9797083at2"/>
<dbReference type="BioCyc" id="LACI272621:G1G49-1187-MONOMER"/>
<dbReference type="Proteomes" id="UP000006381">
    <property type="component" value="Chromosome"/>
</dbReference>
<dbReference type="GO" id="GO:0043590">
    <property type="term" value="C:bacterial nucleoid"/>
    <property type="evidence" value="ECO:0007669"/>
    <property type="project" value="TreeGrafter"/>
</dbReference>
<dbReference type="GO" id="GO:0006310">
    <property type="term" value="P:DNA recombination"/>
    <property type="evidence" value="ECO:0007669"/>
    <property type="project" value="UniProtKB-UniRule"/>
</dbReference>
<dbReference type="GO" id="GO:0006302">
    <property type="term" value="P:double-strand break repair"/>
    <property type="evidence" value="ECO:0007669"/>
    <property type="project" value="TreeGrafter"/>
</dbReference>
<dbReference type="Gene3D" id="2.40.50.140">
    <property type="entry name" value="Nucleic acid-binding proteins"/>
    <property type="match status" value="1"/>
</dbReference>
<dbReference type="Gene3D" id="1.20.1440.120">
    <property type="entry name" value="Recombination protein O, C-terminal domain"/>
    <property type="match status" value="1"/>
</dbReference>
<dbReference type="Gene3D" id="6.20.220.20">
    <property type="entry name" value="Recombination protein O, zinc-binding domain"/>
    <property type="match status" value="1"/>
</dbReference>
<dbReference type="HAMAP" id="MF_00201">
    <property type="entry name" value="RecO"/>
    <property type="match status" value="1"/>
</dbReference>
<dbReference type="InterPro" id="IPR037278">
    <property type="entry name" value="ARFGAP/RecO"/>
</dbReference>
<dbReference type="InterPro" id="IPR022572">
    <property type="entry name" value="DNA_rep/recomb_RecO_N"/>
</dbReference>
<dbReference type="InterPro" id="IPR012340">
    <property type="entry name" value="NA-bd_OB-fold"/>
</dbReference>
<dbReference type="InterPro" id="IPR003717">
    <property type="entry name" value="RecO"/>
</dbReference>
<dbReference type="InterPro" id="IPR042242">
    <property type="entry name" value="RecO_C"/>
</dbReference>
<dbReference type="NCBIfam" id="TIGR00613">
    <property type="entry name" value="reco"/>
    <property type="match status" value="1"/>
</dbReference>
<dbReference type="PANTHER" id="PTHR33991">
    <property type="entry name" value="DNA REPAIR PROTEIN RECO"/>
    <property type="match status" value="1"/>
</dbReference>
<dbReference type="PANTHER" id="PTHR33991:SF1">
    <property type="entry name" value="DNA REPAIR PROTEIN RECO"/>
    <property type="match status" value="1"/>
</dbReference>
<dbReference type="Pfam" id="PF02565">
    <property type="entry name" value="RecO_C"/>
    <property type="match status" value="1"/>
</dbReference>
<dbReference type="Pfam" id="PF11967">
    <property type="entry name" value="RecO_N"/>
    <property type="match status" value="1"/>
</dbReference>
<dbReference type="SUPFAM" id="SSF57863">
    <property type="entry name" value="ArfGap/RecO-like zinc finger"/>
    <property type="match status" value="1"/>
</dbReference>
<dbReference type="SUPFAM" id="SSF50249">
    <property type="entry name" value="Nucleic acid-binding proteins"/>
    <property type="match status" value="1"/>
</dbReference>
<gene>
    <name evidence="1" type="primary">recO</name>
    <name type="ordered locus">LBA1200</name>
</gene>
<sequence>MARELKEVQGIIFKRQKYKEADLLAKIITKQSGIITLIVKGAMRPKSKLSAATLNFSAGTYVIYTSGHGLSNLRTYKKVQQFDALYRDLTKNAYVSFIFDLIDHAFVEYQPLGQYYNLAVFALEKISAGVDSEMITQIVQMKMLSAYGVKPELSHCVICGKEKGIFDYSIKLGGVICSDHFNVVESRLHLKPKETAILRTIGLLPIERLGTIKVSEESKRATRKAIDRIYRETIDLNLKTKKFLDELKLF</sequence>
<keyword id="KW-0227">DNA damage</keyword>
<keyword id="KW-0233">DNA recombination</keyword>
<keyword id="KW-0234">DNA repair</keyword>
<keyword id="KW-1185">Reference proteome</keyword>
<name>RECO_LACAC</name>